<comment type="function">
    <text evidence="1">Catalyzes the interconversion of L-alanine and D-alanine. May also act on other amino acids.</text>
</comment>
<comment type="catalytic activity">
    <reaction evidence="1">
        <text>L-alanine = D-alanine</text>
        <dbReference type="Rhea" id="RHEA:20249"/>
        <dbReference type="ChEBI" id="CHEBI:57416"/>
        <dbReference type="ChEBI" id="CHEBI:57972"/>
        <dbReference type="EC" id="5.1.1.1"/>
    </reaction>
</comment>
<comment type="cofactor">
    <cofactor evidence="1">
        <name>pyridoxal 5'-phosphate</name>
        <dbReference type="ChEBI" id="CHEBI:597326"/>
    </cofactor>
</comment>
<comment type="pathway">
    <text evidence="1">Amino-acid biosynthesis; D-alanine biosynthesis; D-alanine from L-alanine: step 1/1.</text>
</comment>
<comment type="similarity">
    <text evidence="1">Belongs to the alanine racemase family.</text>
</comment>
<proteinExistence type="inferred from homology"/>
<reference key="1">
    <citation type="submission" date="2005-11" db="EMBL/GenBank/DDBJ databases">
        <title>The complete genome sequence of Lawsonia intracellularis: the causative agent of proliferative enteropathy.</title>
        <authorList>
            <person name="Kaur K."/>
            <person name="Zhang Q."/>
            <person name="Beckler D."/>
            <person name="Munir S."/>
            <person name="Li L."/>
            <person name="Kinsley K."/>
            <person name="Herron L."/>
            <person name="Peterson A."/>
            <person name="May B."/>
            <person name="Singh S."/>
            <person name="Gebhart C."/>
            <person name="Kapur V."/>
        </authorList>
    </citation>
    <scope>NUCLEOTIDE SEQUENCE [LARGE SCALE GENOMIC DNA]</scope>
    <source>
        <strain>PHE/MN1-00</strain>
    </source>
</reference>
<sequence>MYSSSVCIKIHLERLRYNLRILRSRYPNVMPVIKANAYGHGIRVVANVLRDEGVQHMAVGSITEGFLLRQEGHQAFLLALLGPFSEEDARIAVVHNITPVIHNIESLQSIVHYSRVHQGGTAVPVAIKIDTGMGRLGFSSNDYISLIDLLRHTPEVNPILLLSHLVAPEISSLDNVTHNQVEQFARAYKAIKEAFPTIKTSLTNSPGLLAWPNYIGDFSRPGIALYGGNPFYGTSRVSLGKGFLPVMEVEAPVVAINTVSAGSSIGYGCTYYAKEDIRVAVIGAGYADGYSRSFSNKGWVVIKGKRYRIVGRVCMQMLMVDITNSHSKISIGDKAFLLGGGGSLAIKPEELAEWWGTIPHEVCCSLGSSIGAQQKQLVII</sequence>
<organism>
    <name type="scientific">Lawsonia intracellularis (strain PHE/MN1-00)</name>
    <dbReference type="NCBI Taxonomy" id="363253"/>
    <lineage>
        <taxon>Bacteria</taxon>
        <taxon>Pseudomonadati</taxon>
        <taxon>Thermodesulfobacteriota</taxon>
        <taxon>Desulfovibrionia</taxon>
        <taxon>Desulfovibrionales</taxon>
        <taxon>Desulfovibrionaceae</taxon>
        <taxon>Lawsonia</taxon>
    </lineage>
</organism>
<keyword id="KW-0413">Isomerase</keyword>
<keyword id="KW-0663">Pyridoxal phosphate</keyword>
<keyword id="KW-1185">Reference proteome</keyword>
<name>ALR_LAWIP</name>
<accession>Q1MSD5</accession>
<evidence type="ECO:0000255" key="1">
    <source>
        <dbReference type="HAMAP-Rule" id="MF_01201"/>
    </source>
</evidence>
<dbReference type="EC" id="5.1.1.1" evidence="1"/>
<dbReference type="EMBL" id="AM180252">
    <property type="protein sequence ID" value="CAJ54090.1"/>
    <property type="molecule type" value="Genomic_DNA"/>
</dbReference>
<dbReference type="RefSeq" id="WP_011526117.1">
    <property type="nucleotide sequence ID" value="NC_008011.1"/>
</dbReference>
<dbReference type="SMR" id="Q1MSD5"/>
<dbReference type="STRING" id="363253.LI0034"/>
<dbReference type="KEGG" id="lip:LI0034"/>
<dbReference type="eggNOG" id="COG0787">
    <property type="taxonomic scope" value="Bacteria"/>
</dbReference>
<dbReference type="HOGENOM" id="CLU_028393_2_2_7"/>
<dbReference type="OrthoDB" id="9813814at2"/>
<dbReference type="UniPathway" id="UPA00042">
    <property type="reaction ID" value="UER00497"/>
</dbReference>
<dbReference type="Proteomes" id="UP000002430">
    <property type="component" value="Chromosome"/>
</dbReference>
<dbReference type="GO" id="GO:0005829">
    <property type="term" value="C:cytosol"/>
    <property type="evidence" value="ECO:0007669"/>
    <property type="project" value="TreeGrafter"/>
</dbReference>
<dbReference type="GO" id="GO:0008784">
    <property type="term" value="F:alanine racemase activity"/>
    <property type="evidence" value="ECO:0007669"/>
    <property type="project" value="UniProtKB-UniRule"/>
</dbReference>
<dbReference type="GO" id="GO:0030170">
    <property type="term" value="F:pyridoxal phosphate binding"/>
    <property type="evidence" value="ECO:0007669"/>
    <property type="project" value="UniProtKB-UniRule"/>
</dbReference>
<dbReference type="GO" id="GO:0030632">
    <property type="term" value="P:D-alanine biosynthetic process"/>
    <property type="evidence" value="ECO:0007669"/>
    <property type="project" value="UniProtKB-UniRule"/>
</dbReference>
<dbReference type="CDD" id="cd00430">
    <property type="entry name" value="PLPDE_III_AR"/>
    <property type="match status" value="1"/>
</dbReference>
<dbReference type="Gene3D" id="3.20.20.10">
    <property type="entry name" value="Alanine racemase"/>
    <property type="match status" value="1"/>
</dbReference>
<dbReference type="Gene3D" id="2.40.37.10">
    <property type="entry name" value="Lyase, Ornithine Decarboxylase, Chain A, domain 1"/>
    <property type="match status" value="1"/>
</dbReference>
<dbReference type="HAMAP" id="MF_01201">
    <property type="entry name" value="Ala_racemase"/>
    <property type="match status" value="1"/>
</dbReference>
<dbReference type="InterPro" id="IPR000821">
    <property type="entry name" value="Ala_racemase"/>
</dbReference>
<dbReference type="InterPro" id="IPR009006">
    <property type="entry name" value="Ala_racemase/Decarboxylase_C"/>
</dbReference>
<dbReference type="InterPro" id="IPR011079">
    <property type="entry name" value="Ala_racemase_C"/>
</dbReference>
<dbReference type="InterPro" id="IPR001608">
    <property type="entry name" value="Ala_racemase_N"/>
</dbReference>
<dbReference type="InterPro" id="IPR020622">
    <property type="entry name" value="Ala_racemase_pyridoxalP-BS"/>
</dbReference>
<dbReference type="InterPro" id="IPR029066">
    <property type="entry name" value="PLP-binding_barrel"/>
</dbReference>
<dbReference type="NCBIfam" id="TIGR00492">
    <property type="entry name" value="alr"/>
    <property type="match status" value="1"/>
</dbReference>
<dbReference type="PANTHER" id="PTHR30511">
    <property type="entry name" value="ALANINE RACEMASE"/>
    <property type="match status" value="1"/>
</dbReference>
<dbReference type="PANTHER" id="PTHR30511:SF0">
    <property type="entry name" value="ALANINE RACEMASE, CATABOLIC-RELATED"/>
    <property type="match status" value="1"/>
</dbReference>
<dbReference type="Pfam" id="PF00842">
    <property type="entry name" value="Ala_racemase_C"/>
    <property type="match status" value="1"/>
</dbReference>
<dbReference type="Pfam" id="PF01168">
    <property type="entry name" value="Ala_racemase_N"/>
    <property type="match status" value="1"/>
</dbReference>
<dbReference type="PRINTS" id="PR00992">
    <property type="entry name" value="ALARACEMASE"/>
</dbReference>
<dbReference type="SMART" id="SM01005">
    <property type="entry name" value="Ala_racemase_C"/>
    <property type="match status" value="1"/>
</dbReference>
<dbReference type="SUPFAM" id="SSF50621">
    <property type="entry name" value="Alanine racemase C-terminal domain-like"/>
    <property type="match status" value="1"/>
</dbReference>
<dbReference type="SUPFAM" id="SSF51419">
    <property type="entry name" value="PLP-binding barrel"/>
    <property type="match status" value="1"/>
</dbReference>
<dbReference type="PROSITE" id="PS00395">
    <property type="entry name" value="ALANINE_RACEMASE"/>
    <property type="match status" value="1"/>
</dbReference>
<gene>
    <name type="primary">alr</name>
    <name type="ordered locus">LI0034</name>
</gene>
<feature type="chain" id="PRO_1000066005" description="Alanine racemase">
    <location>
        <begin position="1"/>
        <end position="380"/>
    </location>
</feature>
<feature type="active site" description="Proton acceptor; specific for D-alanine" evidence="1">
    <location>
        <position position="34"/>
    </location>
</feature>
<feature type="active site" description="Proton acceptor; specific for L-alanine" evidence="1">
    <location>
        <position position="267"/>
    </location>
</feature>
<feature type="binding site" evidence="1">
    <location>
        <position position="135"/>
    </location>
    <ligand>
        <name>substrate</name>
    </ligand>
</feature>
<feature type="binding site" evidence="1">
    <location>
        <position position="315"/>
    </location>
    <ligand>
        <name>substrate</name>
    </ligand>
</feature>
<feature type="modified residue" description="N6-(pyridoxal phosphate)lysine" evidence="1">
    <location>
        <position position="34"/>
    </location>
</feature>
<protein>
    <recommendedName>
        <fullName evidence="1">Alanine racemase</fullName>
        <ecNumber evidence="1">5.1.1.1</ecNumber>
    </recommendedName>
</protein>